<feature type="chain" id="PRO_0000298707" description="Pyrimidine/purine nucleoside phosphorylase">
    <location>
        <begin position="1"/>
        <end position="93"/>
    </location>
</feature>
<organism>
    <name type="scientific">Pseudoalteromonas atlantica (strain T6c / ATCC BAA-1087)</name>
    <dbReference type="NCBI Taxonomy" id="3042615"/>
    <lineage>
        <taxon>Bacteria</taxon>
        <taxon>Pseudomonadati</taxon>
        <taxon>Pseudomonadota</taxon>
        <taxon>Gammaproteobacteria</taxon>
        <taxon>Alteromonadales</taxon>
        <taxon>Alteromonadaceae</taxon>
        <taxon>Paraglaciecola</taxon>
    </lineage>
</organism>
<dbReference type="EC" id="2.4.2.1" evidence="1"/>
<dbReference type="EC" id="2.4.2.2" evidence="1"/>
<dbReference type="EMBL" id="CP000388">
    <property type="protein sequence ID" value="ABG40069.1"/>
    <property type="molecule type" value="Genomic_DNA"/>
</dbReference>
<dbReference type="RefSeq" id="WP_011574384.1">
    <property type="nucleotide sequence ID" value="NC_008228.1"/>
</dbReference>
<dbReference type="SMR" id="Q15VL9"/>
<dbReference type="STRING" id="342610.Patl_1547"/>
<dbReference type="KEGG" id="pat:Patl_1547"/>
<dbReference type="eggNOG" id="COG3123">
    <property type="taxonomic scope" value="Bacteria"/>
</dbReference>
<dbReference type="HOGENOM" id="CLU_157874_0_0_6"/>
<dbReference type="OrthoDB" id="9793848at2"/>
<dbReference type="Proteomes" id="UP000001981">
    <property type="component" value="Chromosome"/>
</dbReference>
<dbReference type="GO" id="GO:0005829">
    <property type="term" value="C:cytosol"/>
    <property type="evidence" value="ECO:0007669"/>
    <property type="project" value="TreeGrafter"/>
</dbReference>
<dbReference type="GO" id="GO:0047975">
    <property type="term" value="F:guanosine phosphorylase activity"/>
    <property type="evidence" value="ECO:0007669"/>
    <property type="project" value="UniProtKB-EC"/>
</dbReference>
<dbReference type="GO" id="GO:0004731">
    <property type="term" value="F:purine-nucleoside phosphorylase activity"/>
    <property type="evidence" value="ECO:0007669"/>
    <property type="project" value="UniProtKB-UniRule"/>
</dbReference>
<dbReference type="GO" id="GO:0009032">
    <property type="term" value="F:thymidine phosphorylase activity"/>
    <property type="evidence" value="ECO:0007669"/>
    <property type="project" value="UniProtKB-EC"/>
</dbReference>
<dbReference type="GO" id="GO:0004850">
    <property type="term" value="F:uridine phosphorylase activity"/>
    <property type="evidence" value="ECO:0007669"/>
    <property type="project" value="UniProtKB-EC"/>
</dbReference>
<dbReference type="CDD" id="cd20296">
    <property type="entry name" value="cupin_PpnP-like"/>
    <property type="match status" value="1"/>
</dbReference>
<dbReference type="FunFam" id="2.60.120.10:FF:000016">
    <property type="entry name" value="Pyrimidine/purine nucleoside phosphorylase"/>
    <property type="match status" value="1"/>
</dbReference>
<dbReference type="Gene3D" id="2.60.120.10">
    <property type="entry name" value="Jelly Rolls"/>
    <property type="match status" value="1"/>
</dbReference>
<dbReference type="HAMAP" id="MF_01537">
    <property type="entry name" value="Nucleos_phosphorylase_PpnP"/>
    <property type="match status" value="1"/>
</dbReference>
<dbReference type="InterPro" id="IPR009664">
    <property type="entry name" value="Ppnp"/>
</dbReference>
<dbReference type="InterPro" id="IPR014710">
    <property type="entry name" value="RmlC-like_jellyroll"/>
</dbReference>
<dbReference type="InterPro" id="IPR011051">
    <property type="entry name" value="RmlC_Cupin_sf"/>
</dbReference>
<dbReference type="PANTHER" id="PTHR36540">
    <property type="entry name" value="PYRIMIDINE/PURINE NUCLEOSIDE PHOSPHORYLASE"/>
    <property type="match status" value="1"/>
</dbReference>
<dbReference type="PANTHER" id="PTHR36540:SF1">
    <property type="entry name" value="PYRIMIDINE_PURINE NUCLEOSIDE PHOSPHORYLASE"/>
    <property type="match status" value="1"/>
</dbReference>
<dbReference type="Pfam" id="PF06865">
    <property type="entry name" value="Ppnp"/>
    <property type="match status" value="1"/>
</dbReference>
<dbReference type="SUPFAM" id="SSF51182">
    <property type="entry name" value="RmlC-like cupins"/>
    <property type="match status" value="1"/>
</dbReference>
<reference key="1">
    <citation type="submission" date="2006-06" db="EMBL/GenBank/DDBJ databases">
        <title>Complete sequence of Pseudoalteromonas atlantica T6c.</title>
        <authorList>
            <consortium name="US DOE Joint Genome Institute"/>
            <person name="Copeland A."/>
            <person name="Lucas S."/>
            <person name="Lapidus A."/>
            <person name="Barry K."/>
            <person name="Detter J.C."/>
            <person name="Glavina del Rio T."/>
            <person name="Hammon N."/>
            <person name="Israni S."/>
            <person name="Dalin E."/>
            <person name="Tice H."/>
            <person name="Pitluck S."/>
            <person name="Saunders E."/>
            <person name="Brettin T."/>
            <person name="Bruce D."/>
            <person name="Han C."/>
            <person name="Tapia R."/>
            <person name="Gilna P."/>
            <person name="Schmutz J."/>
            <person name="Larimer F."/>
            <person name="Land M."/>
            <person name="Hauser L."/>
            <person name="Kyrpides N."/>
            <person name="Kim E."/>
            <person name="Karls A.C."/>
            <person name="Bartlett D."/>
            <person name="Higgins B.P."/>
            <person name="Richardson P."/>
        </authorList>
    </citation>
    <scope>NUCLEOTIDE SEQUENCE [LARGE SCALE GENOMIC DNA]</scope>
    <source>
        <strain>T6c / ATCC BAA-1087</strain>
    </source>
</reference>
<evidence type="ECO:0000255" key="1">
    <source>
        <dbReference type="HAMAP-Rule" id="MF_01537"/>
    </source>
</evidence>
<protein>
    <recommendedName>
        <fullName evidence="1">Pyrimidine/purine nucleoside phosphorylase</fullName>
        <ecNumber evidence="1">2.4.2.1</ecNumber>
        <ecNumber evidence="1">2.4.2.2</ecNumber>
    </recommendedName>
    <alternativeName>
        <fullName evidence="1">Adenosine phosphorylase</fullName>
    </alternativeName>
    <alternativeName>
        <fullName evidence="1">Cytidine phosphorylase</fullName>
    </alternativeName>
    <alternativeName>
        <fullName evidence="1">Guanosine phosphorylase</fullName>
    </alternativeName>
    <alternativeName>
        <fullName evidence="1">Inosine phosphorylase</fullName>
    </alternativeName>
    <alternativeName>
        <fullName evidence="1">Thymidine phosphorylase</fullName>
    </alternativeName>
    <alternativeName>
        <fullName evidence="1">Uridine phosphorylase</fullName>
    </alternativeName>
    <alternativeName>
        <fullName evidence="1">Xanthosine phosphorylase</fullName>
    </alternativeName>
</protein>
<sequence length="93" mass="10056">MFNVNEYFEGNVKSIAFDTAVGNSTLGVMAPGEYEFATSQHETMSVVSGAMTVLLPGESEWKTLTAGQVFTVDANVKFKAQVSVNTAYLCDYV</sequence>
<gene>
    <name evidence="1" type="primary">ppnP</name>
    <name type="ordered locus">Patl_1547</name>
</gene>
<comment type="function">
    <text evidence="1">Catalyzes the phosphorolysis of diverse nucleosides, yielding D-ribose 1-phosphate and the respective free bases. Can use uridine, adenosine, guanosine, cytidine, thymidine, inosine and xanthosine as substrates. Also catalyzes the reverse reactions.</text>
</comment>
<comment type="catalytic activity">
    <reaction evidence="1">
        <text>a purine D-ribonucleoside + phosphate = a purine nucleobase + alpha-D-ribose 1-phosphate</text>
        <dbReference type="Rhea" id="RHEA:19805"/>
        <dbReference type="ChEBI" id="CHEBI:26386"/>
        <dbReference type="ChEBI" id="CHEBI:43474"/>
        <dbReference type="ChEBI" id="CHEBI:57720"/>
        <dbReference type="ChEBI" id="CHEBI:142355"/>
        <dbReference type="EC" id="2.4.2.1"/>
    </reaction>
</comment>
<comment type="catalytic activity">
    <reaction evidence="1">
        <text>adenosine + phosphate = alpha-D-ribose 1-phosphate + adenine</text>
        <dbReference type="Rhea" id="RHEA:27642"/>
        <dbReference type="ChEBI" id="CHEBI:16335"/>
        <dbReference type="ChEBI" id="CHEBI:16708"/>
        <dbReference type="ChEBI" id="CHEBI:43474"/>
        <dbReference type="ChEBI" id="CHEBI:57720"/>
        <dbReference type="EC" id="2.4.2.1"/>
    </reaction>
</comment>
<comment type="catalytic activity">
    <reaction evidence="1">
        <text>cytidine + phosphate = cytosine + alpha-D-ribose 1-phosphate</text>
        <dbReference type="Rhea" id="RHEA:52540"/>
        <dbReference type="ChEBI" id="CHEBI:16040"/>
        <dbReference type="ChEBI" id="CHEBI:17562"/>
        <dbReference type="ChEBI" id="CHEBI:43474"/>
        <dbReference type="ChEBI" id="CHEBI:57720"/>
        <dbReference type="EC" id="2.4.2.2"/>
    </reaction>
</comment>
<comment type="catalytic activity">
    <reaction evidence="1">
        <text>guanosine + phosphate = alpha-D-ribose 1-phosphate + guanine</text>
        <dbReference type="Rhea" id="RHEA:13233"/>
        <dbReference type="ChEBI" id="CHEBI:16235"/>
        <dbReference type="ChEBI" id="CHEBI:16750"/>
        <dbReference type="ChEBI" id="CHEBI:43474"/>
        <dbReference type="ChEBI" id="CHEBI:57720"/>
        <dbReference type="EC" id="2.4.2.1"/>
    </reaction>
</comment>
<comment type="catalytic activity">
    <reaction evidence="1">
        <text>inosine + phosphate = alpha-D-ribose 1-phosphate + hypoxanthine</text>
        <dbReference type="Rhea" id="RHEA:27646"/>
        <dbReference type="ChEBI" id="CHEBI:17368"/>
        <dbReference type="ChEBI" id="CHEBI:17596"/>
        <dbReference type="ChEBI" id="CHEBI:43474"/>
        <dbReference type="ChEBI" id="CHEBI:57720"/>
        <dbReference type="EC" id="2.4.2.1"/>
    </reaction>
</comment>
<comment type="catalytic activity">
    <reaction evidence="1">
        <text>thymidine + phosphate = 2-deoxy-alpha-D-ribose 1-phosphate + thymine</text>
        <dbReference type="Rhea" id="RHEA:16037"/>
        <dbReference type="ChEBI" id="CHEBI:17748"/>
        <dbReference type="ChEBI" id="CHEBI:17821"/>
        <dbReference type="ChEBI" id="CHEBI:43474"/>
        <dbReference type="ChEBI" id="CHEBI:57259"/>
        <dbReference type="EC" id="2.4.2.2"/>
    </reaction>
</comment>
<comment type="catalytic activity">
    <reaction evidence="1">
        <text>uridine + phosphate = alpha-D-ribose 1-phosphate + uracil</text>
        <dbReference type="Rhea" id="RHEA:24388"/>
        <dbReference type="ChEBI" id="CHEBI:16704"/>
        <dbReference type="ChEBI" id="CHEBI:17568"/>
        <dbReference type="ChEBI" id="CHEBI:43474"/>
        <dbReference type="ChEBI" id="CHEBI:57720"/>
        <dbReference type="EC" id="2.4.2.2"/>
    </reaction>
</comment>
<comment type="catalytic activity">
    <reaction evidence="1">
        <text>xanthosine + phosphate = alpha-D-ribose 1-phosphate + xanthine</text>
        <dbReference type="Rhea" id="RHEA:27638"/>
        <dbReference type="ChEBI" id="CHEBI:17712"/>
        <dbReference type="ChEBI" id="CHEBI:18107"/>
        <dbReference type="ChEBI" id="CHEBI:43474"/>
        <dbReference type="ChEBI" id="CHEBI:57720"/>
        <dbReference type="EC" id="2.4.2.1"/>
    </reaction>
</comment>
<comment type="similarity">
    <text evidence="1">Belongs to the nucleoside phosphorylase PpnP family.</text>
</comment>
<keyword id="KW-0328">Glycosyltransferase</keyword>
<keyword id="KW-0808">Transferase</keyword>
<accession>Q15VL9</accession>
<name>PPNP_PSEA6</name>
<proteinExistence type="inferred from homology"/>